<proteinExistence type="inferred from homology"/>
<evidence type="ECO:0000250" key="1"/>
<evidence type="ECO:0000255" key="2"/>
<evidence type="ECO:0000305" key="3"/>
<accession>A9RAH4</accession>
<comment type="function">
    <text evidence="1">Mitochondrial membrane ATP synthase (F(1)F(0) ATP synthase or Complex V) produces ATP from ADP in the presence of a proton gradient across the membrane which is generated by electron transport complexes of the respiratory chain. F-type ATPases consist of two structural domains, F(1) - containing the extramembraneous catalytic core and F(0) - containing the membrane proton channel, linked together by a central stalk and a peripheral stalk. During catalysis, ATP synthesis in the catalytic domain of F(1) is coupled via a rotary mechanism of the central stalk subunits to proton translocation. Part of the complex F(0) domain. A homomeric c-ring of probably 10 subunits is part of the complex rotary element (By similarity).</text>
</comment>
<comment type="subunit">
    <text>F-type ATPases have 2 components, CF(1) - the catalytic core - and CF(0) - the membrane proton channel. CF(1) has five subunits: alpha(3), beta(3), gamma(1), delta(1), epsilon(1). CF(0) has three main subunits: a, b and c.</text>
</comment>
<comment type="subcellular location">
    <subcellularLocation>
        <location evidence="3">Mitochondrion membrane</location>
        <topology evidence="3">Multi-pass membrane protein</topology>
    </subcellularLocation>
</comment>
<comment type="similarity">
    <text evidence="3">Belongs to the ATPase C chain family.</text>
</comment>
<gene>
    <name type="primary">ATP9</name>
</gene>
<sequence length="76" mass="7794">MQLALAAKYIGASMATLGLGGAAIGIALVFVALINGTSRNPSLRATLFPQAILGFALAEACGLFCLMMSFLLLYAV</sequence>
<organism>
    <name type="scientific">Debaryomyces hansenii (strain ATCC 36239 / CBS 767 / BCRC 21394 / JCM 1990 / NBRC 0083 / IGC 2968)</name>
    <name type="common">Yeast</name>
    <name type="synonym">Torulaspora hansenii</name>
    <dbReference type="NCBI Taxonomy" id="284592"/>
    <lineage>
        <taxon>Eukaryota</taxon>
        <taxon>Fungi</taxon>
        <taxon>Dikarya</taxon>
        <taxon>Ascomycota</taxon>
        <taxon>Saccharomycotina</taxon>
        <taxon>Pichiomycetes</taxon>
        <taxon>Debaryomycetaceae</taxon>
        <taxon>Debaryomyces</taxon>
    </lineage>
</organism>
<dbReference type="EMBL" id="DQ508940">
    <property type="protein sequence ID" value="ABF58075.1"/>
    <property type="molecule type" value="Genomic_DNA"/>
</dbReference>
<dbReference type="RefSeq" id="YP_001621426.1">
    <property type="nucleotide sequence ID" value="NC_010166.1"/>
</dbReference>
<dbReference type="SMR" id="A9RAH4"/>
<dbReference type="FunCoup" id="A9RAH4">
    <property type="interactions" value="887"/>
</dbReference>
<dbReference type="STRING" id="284592.A9RAH4"/>
<dbReference type="GeneID" id="5845850"/>
<dbReference type="KEGG" id="dha:ATP9"/>
<dbReference type="InParanoid" id="A9RAH4"/>
<dbReference type="Proteomes" id="UP000000599">
    <property type="component" value="Mitochondrion"/>
</dbReference>
<dbReference type="GO" id="GO:0031966">
    <property type="term" value="C:mitochondrial membrane"/>
    <property type="evidence" value="ECO:0007669"/>
    <property type="project" value="UniProtKB-SubCell"/>
</dbReference>
<dbReference type="GO" id="GO:0045259">
    <property type="term" value="C:proton-transporting ATP synthase complex"/>
    <property type="evidence" value="ECO:0007669"/>
    <property type="project" value="UniProtKB-KW"/>
</dbReference>
<dbReference type="GO" id="GO:0033177">
    <property type="term" value="C:proton-transporting two-sector ATPase complex, proton-transporting domain"/>
    <property type="evidence" value="ECO:0007669"/>
    <property type="project" value="InterPro"/>
</dbReference>
<dbReference type="GO" id="GO:0008289">
    <property type="term" value="F:lipid binding"/>
    <property type="evidence" value="ECO:0007669"/>
    <property type="project" value="UniProtKB-KW"/>
</dbReference>
<dbReference type="GO" id="GO:0015078">
    <property type="term" value="F:proton transmembrane transporter activity"/>
    <property type="evidence" value="ECO:0007669"/>
    <property type="project" value="InterPro"/>
</dbReference>
<dbReference type="GO" id="GO:0015986">
    <property type="term" value="P:proton motive force-driven ATP synthesis"/>
    <property type="evidence" value="ECO:0007669"/>
    <property type="project" value="InterPro"/>
</dbReference>
<dbReference type="CDD" id="cd18182">
    <property type="entry name" value="ATP-synt_Fo_c_ATP5G3"/>
    <property type="match status" value="1"/>
</dbReference>
<dbReference type="FunFam" id="1.20.20.10:FF:000003">
    <property type="entry name" value="Atp synthase f complex subunit mitochondrial"/>
    <property type="match status" value="1"/>
</dbReference>
<dbReference type="Gene3D" id="1.20.20.10">
    <property type="entry name" value="F1F0 ATP synthase subunit C"/>
    <property type="match status" value="1"/>
</dbReference>
<dbReference type="HAMAP" id="MF_01396">
    <property type="entry name" value="ATP_synth_c_bact"/>
    <property type="match status" value="1"/>
</dbReference>
<dbReference type="InterPro" id="IPR000454">
    <property type="entry name" value="ATP_synth_F0_csu"/>
</dbReference>
<dbReference type="InterPro" id="IPR020537">
    <property type="entry name" value="ATP_synth_F0_csu_DDCD_BS"/>
</dbReference>
<dbReference type="InterPro" id="IPR038662">
    <property type="entry name" value="ATP_synth_F0_csu_sf"/>
</dbReference>
<dbReference type="InterPro" id="IPR002379">
    <property type="entry name" value="ATPase_proteolipid_c-like_dom"/>
</dbReference>
<dbReference type="InterPro" id="IPR035921">
    <property type="entry name" value="F/V-ATP_Csub_sf"/>
</dbReference>
<dbReference type="PANTHER" id="PTHR10031">
    <property type="entry name" value="ATP SYNTHASE LIPID-BINDING PROTEIN, MITOCHONDRIAL"/>
    <property type="match status" value="1"/>
</dbReference>
<dbReference type="PANTHER" id="PTHR10031:SF0">
    <property type="entry name" value="ATPASE PROTEIN 9"/>
    <property type="match status" value="1"/>
</dbReference>
<dbReference type="Pfam" id="PF00137">
    <property type="entry name" value="ATP-synt_C"/>
    <property type="match status" value="1"/>
</dbReference>
<dbReference type="PRINTS" id="PR00124">
    <property type="entry name" value="ATPASEC"/>
</dbReference>
<dbReference type="SUPFAM" id="SSF81333">
    <property type="entry name" value="F1F0 ATP synthase subunit C"/>
    <property type="match status" value="1"/>
</dbReference>
<dbReference type="PROSITE" id="PS00605">
    <property type="entry name" value="ATPASE_C"/>
    <property type="match status" value="1"/>
</dbReference>
<name>ATP9_DEBHA</name>
<geneLocation type="mitochondrion"/>
<protein>
    <recommendedName>
        <fullName>ATP synthase subunit 9, mitochondrial</fullName>
    </recommendedName>
    <alternativeName>
        <fullName>Lipid-binding protein</fullName>
    </alternativeName>
</protein>
<reference key="1">
    <citation type="journal article" date="2008" name="FEMS Yeast Res.">
        <title>Promiscuous DNA in the nuclear genomes of hemiascomycetous yeasts.</title>
        <authorList>
            <person name="Sacerdot C."/>
            <person name="Casaregola S."/>
            <person name="Lafontaine I."/>
            <person name="Tekaia F."/>
            <person name="Dujon B."/>
            <person name="Ozier-Kalogeropoulos O."/>
        </authorList>
    </citation>
    <scope>NUCLEOTIDE SEQUENCE [LARGE SCALE GENOMIC DNA]</scope>
    <source>
        <strain>ATCC 36239 / CBS 767 / BCRC 21394 / JCM 1990 / NBRC 0083 / IGC 2968</strain>
    </source>
</reference>
<feature type="chain" id="PRO_0000355017" description="ATP synthase subunit 9, mitochondrial">
    <location>
        <begin position="1"/>
        <end position="76"/>
    </location>
</feature>
<feature type="transmembrane region" description="Helical" evidence="2">
    <location>
        <begin position="14"/>
        <end position="34"/>
    </location>
</feature>
<feature type="transmembrane region" description="Helical" evidence="2">
    <location>
        <begin position="52"/>
        <end position="72"/>
    </location>
</feature>
<feature type="site" description="Reversibly protonated during proton transport" evidence="1">
    <location>
        <position position="59"/>
    </location>
</feature>
<keyword id="KW-0138">CF(0)</keyword>
<keyword id="KW-0375">Hydrogen ion transport</keyword>
<keyword id="KW-0406">Ion transport</keyword>
<keyword id="KW-0446">Lipid-binding</keyword>
<keyword id="KW-0472">Membrane</keyword>
<keyword id="KW-0496">Mitochondrion</keyword>
<keyword id="KW-1185">Reference proteome</keyword>
<keyword id="KW-0812">Transmembrane</keyword>
<keyword id="KW-1133">Transmembrane helix</keyword>
<keyword id="KW-0813">Transport</keyword>